<name>TPMT_LEGPH</name>
<accession>Q5ZRP5</accession>
<feature type="chain" id="PRO_0000220122" description="Thiopurine S-methyltransferase">
    <location>
        <begin position="1"/>
        <end position="221"/>
    </location>
</feature>
<feature type="binding site" evidence="1">
    <location>
        <position position="12"/>
    </location>
    <ligand>
        <name>S-adenosyl-L-methionine</name>
        <dbReference type="ChEBI" id="CHEBI:59789"/>
    </ligand>
</feature>
<feature type="binding site" evidence="1">
    <location>
        <position position="47"/>
    </location>
    <ligand>
        <name>S-adenosyl-L-methionine</name>
        <dbReference type="ChEBI" id="CHEBI:59789"/>
    </ligand>
</feature>
<feature type="binding site" evidence="1">
    <location>
        <position position="68"/>
    </location>
    <ligand>
        <name>S-adenosyl-L-methionine</name>
        <dbReference type="ChEBI" id="CHEBI:59789"/>
    </ligand>
</feature>
<feature type="binding site" evidence="1">
    <location>
        <position position="125"/>
    </location>
    <ligand>
        <name>S-adenosyl-L-methionine</name>
        <dbReference type="ChEBI" id="CHEBI:59789"/>
    </ligand>
</feature>
<protein>
    <recommendedName>
        <fullName evidence="1">Thiopurine S-methyltransferase</fullName>
        <ecNumber evidence="1">2.1.1.67</ecNumber>
    </recommendedName>
    <alternativeName>
        <fullName evidence="1">Thiopurine methyltransferase</fullName>
    </alternativeName>
</protein>
<dbReference type="EC" id="2.1.1.67" evidence="1"/>
<dbReference type="EMBL" id="AE017354">
    <property type="protein sequence ID" value="AAU28883.1"/>
    <property type="molecule type" value="Genomic_DNA"/>
</dbReference>
<dbReference type="RefSeq" id="WP_010948522.1">
    <property type="nucleotide sequence ID" value="NC_002942.5"/>
</dbReference>
<dbReference type="RefSeq" id="YP_096830.1">
    <property type="nucleotide sequence ID" value="NC_002942.5"/>
</dbReference>
<dbReference type="SMR" id="Q5ZRP5"/>
<dbReference type="STRING" id="272624.lpg2835"/>
<dbReference type="PaxDb" id="272624-lpg2835"/>
<dbReference type="KEGG" id="lpn:lpg2835"/>
<dbReference type="PATRIC" id="fig|272624.6.peg.3020"/>
<dbReference type="eggNOG" id="COG0500">
    <property type="taxonomic scope" value="Bacteria"/>
</dbReference>
<dbReference type="HOGENOM" id="CLU_085515_1_0_6"/>
<dbReference type="OrthoDB" id="9778208at2"/>
<dbReference type="Proteomes" id="UP000000609">
    <property type="component" value="Chromosome"/>
</dbReference>
<dbReference type="GO" id="GO:0005737">
    <property type="term" value="C:cytoplasm"/>
    <property type="evidence" value="ECO:0007669"/>
    <property type="project" value="UniProtKB-SubCell"/>
</dbReference>
<dbReference type="GO" id="GO:0008119">
    <property type="term" value="F:thiopurine S-methyltransferase activity"/>
    <property type="evidence" value="ECO:0007669"/>
    <property type="project" value="UniProtKB-UniRule"/>
</dbReference>
<dbReference type="GO" id="GO:0032259">
    <property type="term" value="P:methylation"/>
    <property type="evidence" value="ECO:0007669"/>
    <property type="project" value="UniProtKB-KW"/>
</dbReference>
<dbReference type="GO" id="GO:0010038">
    <property type="term" value="P:response to metal ion"/>
    <property type="evidence" value="ECO:0007669"/>
    <property type="project" value="InterPro"/>
</dbReference>
<dbReference type="CDD" id="cd02440">
    <property type="entry name" value="AdoMet_MTases"/>
    <property type="match status" value="1"/>
</dbReference>
<dbReference type="FunFam" id="3.40.50.150:FF:000101">
    <property type="entry name" value="Thiopurine S-methyltransferase"/>
    <property type="match status" value="1"/>
</dbReference>
<dbReference type="Gene3D" id="3.40.50.150">
    <property type="entry name" value="Vaccinia Virus protein VP39"/>
    <property type="match status" value="1"/>
</dbReference>
<dbReference type="HAMAP" id="MF_00812">
    <property type="entry name" value="Thiopur_methtran"/>
    <property type="match status" value="1"/>
</dbReference>
<dbReference type="InterPro" id="IPR029063">
    <property type="entry name" value="SAM-dependent_MTases_sf"/>
</dbReference>
<dbReference type="InterPro" id="IPR022474">
    <property type="entry name" value="Thiopur_S-MeTfrase_Se/Te_detox"/>
</dbReference>
<dbReference type="InterPro" id="IPR025835">
    <property type="entry name" value="Thiopurine_S-MeTrfase"/>
</dbReference>
<dbReference type="InterPro" id="IPR008854">
    <property type="entry name" value="TPMT"/>
</dbReference>
<dbReference type="NCBIfam" id="NF009732">
    <property type="entry name" value="PRK13255.1"/>
    <property type="match status" value="1"/>
</dbReference>
<dbReference type="NCBIfam" id="TIGR03840">
    <property type="entry name" value="TMPT_Se_Te"/>
    <property type="match status" value="1"/>
</dbReference>
<dbReference type="PANTHER" id="PTHR10259">
    <property type="entry name" value="THIOPURINE S-METHYLTRANSFERASE"/>
    <property type="match status" value="1"/>
</dbReference>
<dbReference type="PANTHER" id="PTHR10259:SF11">
    <property type="entry name" value="THIOPURINE S-METHYLTRANSFERASE"/>
    <property type="match status" value="1"/>
</dbReference>
<dbReference type="Pfam" id="PF05724">
    <property type="entry name" value="TPMT"/>
    <property type="match status" value="1"/>
</dbReference>
<dbReference type="PIRSF" id="PIRSF023956">
    <property type="entry name" value="Thiopurine_S-methyltransferase"/>
    <property type="match status" value="1"/>
</dbReference>
<dbReference type="SUPFAM" id="SSF53335">
    <property type="entry name" value="S-adenosyl-L-methionine-dependent methyltransferases"/>
    <property type="match status" value="1"/>
</dbReference>
<dbReference type="PROSITE" id="PS51585">
    <property type="entry name" value="SAM_MT_TPMT"/>
    <property type="match status" value="1"/>
</dbReference>
<keyword id="KW-0963">Cytoplasm</keyword>
<keyword id="KW-0489">Methyltransferase</keyword>
<keyword id="KW-1185">Reference proteome</keyword>
<keyword id="KW-0949">S-adenosyl-L-methionine</keyword>
<keyword id="KW-0808">Transferase</keyword>
<sequence length="221" mass="25383">MNKGQYFWNELWCEGRISFHKEEVNPDLIAYISSLNIPAKGRVLVPLCGKSVDMLWLVRQGYHVVGIELVEKAILQFVQEHQITVRENTTGQAKQYFTDNLNLWITDIFALNAALIEPVDAIYDRAALVALPKKLRPAYVDICLKWLKPGGSILLKTLQYNQEKVQGPPYSVSPEEIALSYQQCAKIELLKSQKRIREPNDHLFNLGISEVNDYVWRIRKG</sequence>
<comment type="catalytic activity">
    <reaction evidence="1">
        <text>S-adenosyl-L-methionine + a thiopurine = S-adenosyl-L-homocysteine + a thiopurine S-methylether.</text>
        <dbReference type="EC" id="2.1.1.67"/>
    </reaction>
</comment>
<comment type="subcellular location">
    <subcellularLocation>
        <location evidence="1">Cytoplasm</location>
    </subcellularLocation>
</comment>
<comment type="similarity">
    <text evidence="1">Belongs to the class I-like SAM-binding methyltransferase superfamily. TPMT family.</text>
</comment>
<evidence type="ECO:0000255" key="1">
    <source>
        <dbReference type="HAMAP-Rule" id="MF_00812"/>
    </source>
</evidence>
<organism>
    <name type="scientific">Legionella pneumophila subsp. pneumophila (strain Philadelphia 1 / ATCC 33152 / DSM 7513)</name>
    <dbReference type="NCBI Taxonomy" id="272624"/>
    <lineage>
        <taxon>Bacteria</taxon>
        <taxon>Pseudomonadati</taxon>
        <taxon>Pseudomonadota</taxon>
        <taxon>Gammaproteobacteria</taxon>
        <taxon>Legionellales</taxon>
        <taxon>Legionellaceae</taxon>
        <taxon>Legionella</taxon>
    </lineage>
</organism>
<reference key="1">
    <citation type="journal article" date="2004" name="Science">
        <title>The genomic sequence of the accidental pathogen Legionella pneumophila.</title>
        <authorList>
            <person name="Chien M."/>
            <person name="Morozova I."/>
            <person name="Shi S."/>
            <person name="Sheng H."/>
            <person name="Chen J."/>
            <person name="Gomez S.M."/>
            <person name="Asamani G."/>
            <person name="Hill K."/>
            <person name="Nuara J."/>
            <person name="Feder M."/>
            <person name="Rineer J."/>
            <person name="Greenberg J.J."/>
            <person name="Steshenko V."/>
            <person name="Park S.H."/>
            <person name="Zhao B."/>
            <person name="Teplitskaya E."/>
            <person name="Edwards J.R."/>
            <person name="Pampou S."/>
            <person name="Georghiou A."/>
            <person name="Chou I.-C."/>
            <person name="Iannuccilli W."/>
            <person name="Ulz M.E."/>
            <person name="Kim D.H."/>
            <person name="Geringer-Sameth A."/>
            <person name="Goldsberry C."/>
            <person name="Morozov P."/>
            <person name="Fischer S.G."/>
            <person name="Segal G."/>
            <person name="Qu X."/>
            <person name="Rzhetsky A."/>
            <person name="Zhang P."/>
            <person name="Cayanis E."/>
            <person name="De Jong P.J."/>
            <person name="Ju J."/>
            <person name="Kalachikov S."/>
            <person name="Shuman H.A."/>
            <person name="Russo J.J."/>
        </authorList>
    </citation>
    <scope>NUCLEOTIDE SEQUENCE [LARGE SCALE GENOMIC DNA]</scope>
    <source>
        <strain>Philadelphia 1 / ATCC 33152 / DSM 7513</strain>
    </source>
</reference>
<proteinExistence type="inferred from homology"/>
<gene>
    <name evidence="1" type="primary">tpm</name>
    <name type="ordered locus">lpg2835</name>
</gene>